<gene>
    <name type="ordered locus">BAV2213</name>
</gene>
<comment type="function">
    <text evidence="1">Nucleoside triphosphate pyrophosphatase that hydrolyzes dTTP and UTP. May have a dual role in cell division arrest and in preventing the incorporation of modified nucleotides into cellular nucleic acids.</text>
</comment>
<comment type="catalytic activity">
    <reaction evidence="1">
        <text>dTTP + H2O = dTMP + diphosphate + H(+)</text>
        <dbReference type="Rhea" id="RHEA:28534"/>
        <dbReference type="ChEBI" id="CHEBI:15377"/>
        <dbReference type="ChEBI" id="CHEBI:15378"/>
        <dbReference type="ChEBI" id="CHEBI:33019"/>
        <dbReference type="ChEBI" id="CHEBI:37568"/>
        <dbReference type="ChEBI" id="CHEBI:63528"/>
        <dbReference type="EC" id="3.6.1.9"/>
    </reaction>
</comment>
<comment type="catalytic activity">
    <reaction evidence="1">
        <text>UTP + H2O = UMP + diphosphate + H(+)</text>
        <dbReference type="Rhea" id="RHEA:29395"/>
        <dbReference type="ChEBI" id="CHEBI:15377"/>
        <dbReference type="ChEBI" id="CHEBI:15378"/>
        <dbReference type="ChEBI" id="CHEBI:33019"/>
        <dbReference type="ChEBI" id="CHEBI:46398"/>
        <dbReference type="ChEBI" id="CHEBI:57865"/>
        <dbReference type="EC" id="3.6.1.9"/>
    </reaction>
</comment>
<comment type="cofactor">
    <cofactor evidence="1">
        <name>a divalent metal cation</name>
        <dbReference type="ChEBI" id="CHEBI:60240"/>
    </cofactor>
</comment>
<comment type="subcellular location">
    <subcellularLocation>
        <location evidence="1">Cytoplasm</location>
    </subcellularLocation>
</comment>
<comment type="similarity">
    <text evidence="1">Belongs to the Maf family. YhdE subfamily.</text>
</comment>
<dbReference type="EC" id="3.6.1.9" evidence="1"/>
<dbReference type="EMBL" id="AM167904">
    <property type="protein sequence ID" value="CAJ49823.1"/>
    <property type="molecule type" value="Genomic_DNA"/>
</dbReference>
<dbReference type="RefSeq" id="WP_012417875.1">
    <property type="nucleotide sequence ID" value="NC_010645.1"/>
</dbReference>
<dbReference type="SMR" id="Q2KYV3"/>
<dbReference type="STRING" id="360910.BAV2213"/>
<dbReference type="GeneID" id="92934726"/>
<dbReference type="KEGG" id="bav:BAV2213"/>
<dbReference type="eggNOG" id="COG0424">
    <property type="taxonomic scope" value="Bacteria"/>
</dbReference>
<dbReference type="HOGENOM" id="CLU_040416_2_1_4"/>
<dbReference type="OrthoDB" id="9807767at2"/>
<dbReference type="Proteomes" id="UP000001977">
    <property type="component" value="Chromosome"/>
</dbReference>
<dbReference type="GO" id="GO:0005737">
    <property type="term" value="C:cytoplasm"/>
    <property type="evidence" value="ECO:0007669"/>
    <property type="project" value="UniProtKB-SubCell"/>
</dbReference>
<dbReference type="GO" id="GO:0036218">
    <property type="term" value="F:dTTP diphosphatase activity"/>
    <property type="evidence" value="ECO:0007669"/>
    <property type="project" value="RHEA"/>
</dbReference>
<dbReference type="GO" id="GO:0036221">
    <property type="term" value="F:UTP diphosphatase activity"/>
    <property type="evidence" value="ECO:0007669"/>
    <property type="project" value="RHEA"/>
</dbReference>
<dbReference type="GO" id="GO:0009117">
    <property type="term" value="P:nucleotide metabolic process"/>
    <property type="evidence" value="ECO:0007669"/>
    <property type="project" value="UniProtKB-KW"/>
</dbReference>
<dbReference type="CDD" id="cd00555">
    <property type="entry name" value="Maf"/>
    <property type="match status" value="1"/>
</dbReference>
<dbReference type="Gene3D" id="3.90.950.10">
    <property type="match status" value="1"/>
</dbReference>
<dbReference type="HAMAP" id="MF_00528">
    <property type="entry name" value="Maf"/>
    <property type="match status" value="1"/>
</dbReference>
<dbReference type="InterPro" id="IPR029001">
    <property type="entry name" value="ITPase-like_fam"/>
</dbReference>
<dbReference type="InterPro" id="IPR003697">
    <property type="entry name" value="Maf-like"/>
</dbReference>
<dbReference type="NCBIfam" id="TIGR00172">
    <property type="entry name" value="maf"/>
    <property type="match status" value="1"/>
</dbReference>
<dbReference type="PANTHER" id="PTHR43213">
    <property type="entry name" value="BIFUNCTIONAL DTTP/UTP PYROPHOSPHATASE/METHYLTRANSFERASE PROTEIN-RELATED"/>
    <property type="match status" value="1"/>
</dbReference>
<dbReference type="PANTHER" id="PTHR43213:SF5">
    <property type="entry name" value="BIFUNCTIONAL DTTP_UTP PYROPHOSPHATASE_METHYLTRANSFERASE PROTEIN-RELATED"/>
    <property type="match status" value="1"/>
</dbReference>
<dbReference type="Pfam" id="PF02545">
    <property type="entry name" value="Maf"/>
    <property type="match status" value="1"/>
</dbReference>
<dbReference type="PIRSF" id="PIRSF006305">
    <property type="entry name" value="Maf"/>
    <property type="match status" value="1"/>
</dbReference>
<dbReference type="SUPFAM" id="SSF52972">
    <property type="entry name" value="ITPase-like"/>
    <property type="match status" value="1"/>
</dbReference>
<proteinExistence type="inferred from homology"/>
<accession>Q2KYV3</accession>
<feature type="chain" id="PRO_0000267258" description="dTTP/UTP pyrophosphatase">
    <location>
        <begin position="1"/>
        <end position="201"/>
    </location>
</feature>
<feature type="active site" description="Proton acceptor" evidence="1">
    <location>
        <position position="81"/>
    </location>
</feature>
<feature type="site" description="Important for substrate specificity" evidence="1">
    <location>
        <position position="15"/>
    </location>
</feature>
<feature type="site" description="Important for substrate specificity" evidence="1">
    <location>
        <position position="82"/>
    </location>
</feature>
<feature type="site" description="Important for substrate specificity" evidence="1">
    <location>
        <position position="164"/>
    </location>
</feature>
<protein>
    <recommendedName>
        <fullName evidence="1">dTTP/UTP pyrophosphatase</fullName>
        <shortName evidence="1">dTTPase/UTPase</shortName>
        <ecNumber evidence="1">3.6.1.9</ecNumber>
    </recommendedName>
    <alternativeName>
        <fullName evidence="1">Nucleoside triphosphate pyrophosphatase</fullName>
    </alternativeName>
    <alternativeName>
        <fullName evidence="1">Nucleotide pyrophosphatase</fullName>
        <shortName evidence="1">Nucleotide PPase</shortName>
    </alternativeName>
</protein>
<keyword id="KW-0963">Cytoplasm</keyword>
<keyword id="KW-0378">Hydrolase</keyword>
<keyword id="KW-0546">Nucleotide metabolism</keyword>
<keyword id="KW-1185">Reference proteome</keyword>
<sequence>MDHCPRLYLASASPRRRELLTQVGLAHTVLHLPAPPGEDEPQWPGEAAADYVLRTARDKAQRGQIWMREQNLPALPLLAADTTVILDGRVLGKPADRSDAVAMLAALSGTKHEVRTAVVLVHEDRLYEAVSITHVSMRALTAAERERYCDSGEPYGKAGAYGIQGLAGSFISHIDGSYSGVMGLPLFETAELLRRAGIALP</sequence>
<evidence type="ECO:0000255" key="1">
    <source>
        <dbReference type="HAMAP-Rule" id="MF_00528"/>
    </source>
</evidence>
<reference key="1">
    <citation type="journal article" date="2006" name="J. Bacteriol.">
        <title>Comparison of the genome sequence of the poultry pathogen Bordetella avium with those of B. bronchiseptica, B. pertussis, and B. parapertussis reveals extensive diversity in surface structures associated with host interaction.</title>
        <authorList>
            <person name="Sebaihia M."/>
            <person name="Preston A."/>
            <person name="Maskell D.J."/>
            <person name="Kuzmiak H."/>
            <person name="Connell T.D."/>
            <person name="King N.D."/>
            <person name="Orndorff P.E."/>
            <person name="Miyamoto D.M."/>
            <person name="Thomson N.R."/>
            <person name="Harris D."/>
            <person name="Goble A."/>
            <person name="Lord A."/>
            <person name="Murphy L."/>
            <person name="Quail M.A."/>
            <person name="Rutter S."/>
            <person name="Squares R."/>
            <person name="Squares S."/>
            <person name="Woodward J."/>
            <person name="Parkhill J."/>
            <person name="Temple L.M."/>
        </authorList>
    </citation>
    <scope>NUCLEOTIDE SEQUENCE [LARGE SCALE GENOMIC DNA]</scope>
    <source>
        <strain>197N</strain>
    </source>
</reference>
<name>NTPPA_BORA1</name>
<organism>
    <name type="scientific">Bordetella avium (strain 197N)</name>
    <dbReference type="NCBI Taxonomy" id="360910"/>
    <lineage>
        <taxon>Bacteria</taxon>
        <taxon>Pseudomonadati</taxon>
        <taxon>Pseudomonadota</taxon>
        <taxon>Betaproteobacteria</taxon>
        <taxon>Burkholderiales</taxon>
        <taxon>Alcaligenaceae</taxon>
        <taxon>Bordetella</taxon>
    </lineage>
</organism>